<sequence>MAPPKHVIIIGAGAGGTATAARLAREGIKVTVVEKNNFGGGRCSLINHNGHRFDQGPSLYLMPKLFEEAFEALDEKIEDHVELLRCHNNYKVHFDDGDKIQLSSDLSRMKPEMERIEGPDGFLRFLDFMKESHTHYEGGVEMAIKQNFETIWKLIRLQYVPALFRLHIFDFVYSRAAKYFKTKKMRMAFTFQSMYMGMSPYDSPAVYNLLQYTEFAEGIWYPKGGFNTVIQKLENIATEKFGARFIYEAPVAKINTDDKGKKVTGVTLQSGEVIEADAVVCNADLVYAYHNLLPPCRWTTNTLAEKKLTSSSISFYWSLKRVVPELDVHNIFLAEAFKESFDEIFTDHKMPSELSFYVNLPSRIDPTAAPPGKDSMIVLVPIGHMKSKTNEAEDYTMIVKRARKMVLEVLERRLGLTNFIDLVEHEEVNDPSIWQKKFNLWRGSILGLSHDVLQVLWFRPSTQDSTGRYKNLFFVGASTHPGTGVPIVLAGSKLTSDQVCDHFGVKVRPSAITSSKRTYAPEDSKSFIWDIIWFLLIALFAATLVLFIAFPQYSEVNQTAASYINNLLPAAFRVPVANLSLTS</sequence>
<feature type="signal peptide" evidence="2">
    <location>
        <begin position="1"/>
        <end position="20"/>
    </location>
</feature>
<feature type="chain" id="PRO_0000067696" description="Phytoene desaturase">
    <location>
        <begin position="21"/>
        <end position="583"/>
    </location>
</feature>
<feature type="transmembrane region" description="Helical" evidence="2">
    <location>
        <begin position="531"/>
        <end position="551"/>
    </location>
</feature>
<name>CRTI_PHYB8</name>
<reference key="1">
    <citation type="journal article" date="1997" name="Mol. Gen. Genet.">
        <title>The phytoene dehydrogenase gene of Phycomyces: regulation of its expression by blue light and vitamin A.</title>
        <authorList>
            <person name="Ruiz-Hidalgo M.J."/>
            <person name="Benito E.P."/>
            <person name="Sandmann G."/>
            <person name="Eslava A.P."/>
        </authorList>
    </citation>
    <scope>NUCLEOTIDE SEQUENCE [GENOMIC DNA]</scope>
    <source>
        <strain>ATCC 8743b / DSM 1359 / FGSC 10004 / NBRC 33097 / NRRL 1555</strain>
    </source>
</reference>
<organism>
    <name type="scientific">Phycomyces blakesleeanus (strain ATCC 8743b / DSM 1359 / FGSC 10004 / NBRC 33097 / NRRL 1555)</name>
    <dbReference type="NCBI Taxonomy" id="763407"/>
    <lineage>
        <taxon>Eukaryota</taxon>
        <taxon>Fungi</taxon>
        <taxon>Fungi incertae sedis</taxon>
        <taxon>Mucoromycota</taxon>
        <taxon>Mucoromycotina</taxon>
        <taxon>Mucoromycetes</taxon>
        <taxon>Mucorales</taxon>
        <taxon>Phycomycetaceae</taxon>
        <taxon>Phycomyces</taxon>
    </lineage>
</organism>
<keyword id="KW-0125">Carotenoid biosynthesis</keyword>
<keyword id="KW-0472">Membrane</keyword>
<keyword id="KW-0520">NAD</keyword>
<keyword id="KW-0560">Oxidoreductase</keyword>
<keyword id="KW-0732">Signal</keyword>
<keyword id="KW-0812">Transmembrane</keyword>
<keyword id="KW-1133">Transmembrane helix</keyword>
<comment type="function">
    <text evidence="1">Phytoene desaturase involved in the carotenoid biosynthesis pathway. Converts phytoene into 3,4-didehydrolycopene via the intermediary of phytofluene, zeta-carotene, neurosporene and lycopene, by introducing up to five double bonds into phytoene (By similarity).</text>
</comment>
<comment type="catalytic activity">
    <reaction>
        <text>15-cis-phytoene + 5 A = all-trans-3,4-didehydrolycopene + 5 AH2</text>
        <dbReference type="Rhea" id="RHEA:30975"/>
        <dbReference type="ChEBI" id="CHEBI:13193"/>
        <dbReference type="ChEBI" id="CHEBI:17499"/>
        <dbReference type="ChEBI" id="CHEBI:27787"/>
        <dbReference type="ChEBI" id="CHEBI:62474"/>
        <dbReference type="EC" id="1.3.99.30"/>
    </reaction>
</comment>
<comment type="cofactor">
    <cofactor evidence="1">
        <name>NAD(+)</name>
        <dbReference type="ChEBI" id="CHEBI:57540"/>
    </cofactor>
</comment>
<comment type="pathway">
    <text>Carotenoid biosynthesis; lycopene biosynthesis.</text>
</comment>
<comment type="subcellular location">
    <subcellularLocation>
        <location evidence="3">Membrane</location>
        <topology evidence="3">Single-pass membrane protein</topology>
    </subcellularLocation>
</comment>
<comment type="similarity">
    <text evidence="3">Belongs to the carotenoid/retinoid oxidoreductase family.</text>
</comment>
<protein>
    <recommendedName>
        <fullName>Phytoene desaturase</fullName>
        <ecNumber>1.3.99.30</ecNumber>
    </recommendedName>
    <alternativeName>
        <fullName>Phytoene desaturase (3,4-didehydrolycopene-forming)</fullName>
    </alternativeName>
</protein>
<evidence type="ECO:0000250" key="1"/>
<evidence type="ECO:0000255" key="2"/>
<evidence type="ECO:0000305" key="3"/>
<proteinExistence type="inferred from homology"/>
<gene>
    <name type="primary">carB</name>
</gene>
<accession>P54982</accession>
<dbReference type="EC" id="1.3.99.30"/>
<dbReference type="EMBL" id="X78434">
    <property type="protein sequence ID" value="CAA55197.1"/>
    <property type="molecule type" value="Genomic_DNA"/>
</dbReference>
<dbReference type="PIR" id="S43139">
    <property type="entry name" value="S43139"/>
</dbReference>
<dbReference type="RefSeq" id="XP_018294564.1">
    <property type="nucleotide sequence ID" value="XM_018440097.1"/>
</dbReference>
<dbReference type="SMR" id="P54982"/>
<dbReference type="GeneID" id="29001003"/>
<dbReference type="VEuPathDB" id="FungiDB:PHYBLDRAFT_37852"/>
<dbReference type="OrthoDB" id="7777654at2759"/>
<dbReference type="UniPathway" id="UPA00803"/>
<dbReference type="GO" id="GO:0016020">
    <property type="term" value="C:membrane"/>
    <property type="evidence" value="ECO:0007669"/>
    <property type="project" value="UniProtKB-SubCell"/>
</dbReference>
<dbReference type="GO" id="GO:0016627">
    <property type="term" value="F:oxidoreductase activity, acting on the CH-CH group of donors"/>
    <property type="evidence" value="ECO:0007669"/>
    <property type="project" value="UniProtKB-ARBA"/>
</dbReference>
<dbReference type="GO" id="GO:0016117">
    <property type="term" value="P:carotenoid biosynthetic process"/>
    <property type="evidence" value="ECO:0007669"/>
    <property type="project" value="UniProtKB-KW"/>
</dbReference>
<dbReference type="FunFam" id="3.50.50.60:FF:000171">
    <property type="entry name" value="zeta-carotene-forming phytoene desaturase"/>
    <property type="match status" value="1"/>
</dbReference>
<dbReference type="Gene3D" id="3.50.50.60">
    <property type="entry name" value="FAD/NAD(P)-binding domain"/>
    <property type="match status" value="2"/>
</dbReference>
<dbReference type="InterPro" id="IPR002937">
    <property type="entry name" value="Amino_oxidase"/>
</dbReference>
<dbReference type="InterPro" id="IPR014105">
    <property type="entry name" value="Carotenoid/retinoid_OxRdtase"/>
</dbReference>
<dbReference type="InterPro" id="IPR036188">
    <property type="entry name" value="FAD/NAD-bd_sf"/>
</dbReference>
<dbReference type="InterPro" id="IPR008150">
    <property type="entry name" value="Phytoene_DH_bac_CS"/>
</dbReference>
<dbReference type="NCBIfam" id="TIGR02734">
    <property type="entry name" value="crtI_fam"/>
    <property type="match status" value="1"/>
</dbReference>
<dbReference type="PANTHER" id="PTHR43734">
    <property type="entry name" value="PHYTOENE DESATURASE"/>
    <property type="match status" value="1"/>
</dbReference>
<dbReference type="PANTHER" id="PTHR43734:SF1">
    <property type="entry name" value="PHYTOENE DESATURASE"/>
    <property type="match status" value="1"/>
</dbReference>
<dbReference type="Pfam" id="PF01593">
    <property type="entry name" value="Amino_oxidase"/>
    <property type="match status" value="1"/>
</dbReference>
<dbReference type="SUPFAM" id="SSF51905">
    <property type="entry name" value="FAD/NAD(P)-binding domain"/>
    <property type="match status" value="1"/>
</dbReference>
<dbReference type="PROSITE" id="PS00982">
    <property type="entry name" value="PHYTOENE_DH"/>
    <property type="match status" value="1"/>
</dbReference>